<comment type="function">
    <text evidence="1">Catalyzes the ATP-dependent amidation of deamido-NAD to form NAD. Uses ammonia as a nitrogen source.</text>
</comment>
<comment type="catalytic activity">
    <reaction evidence="1">
        <text>deamido-NAD(+) + NH4(+) + ATP = AMP + diphosphate + NAD(+) + H(+)</text>
        <dbReference type="Rhea" id="RHEA:21188"/>
        <dbReference type="ChEBI" id="CHEBI:15378"/>
        <dbReference type="ChEBI" id="CHEBI:28938"/>
        <dbReference type="ChEBI" id="CHEBI:30616"/>
        <dbReference type="ChEBI" id="CHEBI:33019"/>
        <dbReference type="ChEBI" id="CHEBI:57540"/>
        <dbReference type="ChEBI" id="CHEBI:58437"/>
        <dbReference type="ChEBI" id="CHEBI:456215"/>
        <dbReference type="EC" id="6.3.1.5"/>
    </reaction>
</comment>
<comment type="pathway">
    <text evidence="1">Cofactor biosynthesis; NAD(+) biosynthesis; NAD(+) from deamido-NAD(+) (ammonia route): step 1/1.</text>
</comment>
<comment type="subunit">
    <text evidence="1">Homodimer.</text>
</comment>
<comment type="similarity">
    <text evidence="1">Belongs to the NAD synthetase family.</text>
</comment>
<protein>
    <recommendedName>
        <fullName evidence="1">NH(3)-dependent NAD(+) synthetase</fullName>
        <ecNumber evidence="1">6.3.1.5</ecNumber>
    </recommendedName>
</protein>
<sequence>MTLQEQIMKALHVQPVIDPKAEIRKRVDFLKDYVKKTGAKGFVLGISGGQDSTLAGRLAQLAVEEIRNEGGNATFIAVRLPYKVQKDEDDAQLALQFIQADQSVAFDIASTVDAFSNQYENLLDESLTDFNKGNVKARIRMVTQYAIGGQKGLLVIGTDHAAEAVTGFFTKFGDGGADLLPLTGLTKRQGRALLQELGADERLYLKMPTADLLDEKPGQADETELGITYDQLDDYLEGKTVPADVAEKIEKRYTVSEHKRQVPASMFDDWWK</sequence>
<evidence type="ECO:0000255" key="1">
    <source>
        <dbReference type="HAMAP-Rule" id="MF_00193"/>
    </source>
</evidence>
<gene>
    <name evidence="1" type="primary">nadE</name>
    <name type="ordered locus">BCQ_1979</name>
</gene>
<proteinExistence type="inferred from homology"/>
<name>NADE_BACCQ</name>
<feature type="chain" id="PRO_1000191497" description="NH(3)-dependent NAD(+) synthetase">
    <location>
        <begin position="1"/>
        <end position="272"/>
    </location>
</feature>
<feature type="binding site" evidence="1">
    <location>
        <begin position="45"/>
        <end position="52"/>
    </location>
    <ligand>
        <name>ATP</name>
        <dbReference type="ChEBI" id="CHEBI:30616"/>
    </ligand>
</feature>
<feature type="binding site" evidence="1">
    <location>
        <position position="51"/>
    </location>
    <ligand>
        <name>Mg(2+)</name>
        <dbReference type="ChEBI" id="CHEBI:18420"/>
    </ligand>
</feature>
<feature type="binding site" evidence="1">
    <location>
        <position position="138"/>
    </location>
    <ligand>
        <name>deamido-NAD(+)</name>
        <dbReference type="ChEBI" id="CHEBI:58437"/>
    </ligand>
</feature>
<feature type="binding site" evidence="1">
    <location>
        <position position="158"/>
    </location>
    <ligand>
        <name>ATP</name>
        <dbReference type="ChEBI" id="CHEBI:30616"/>
    </ligand>
</feature>
<feature type="binding site" evidence="1">
    <location>
        <position position="163"/>
    </location>
    <ligand>
        <name>Mg(2+)</name>
        <dbReference type="ChEBI" id="CHEBI:18420"/>
    </ligand>
</feature>
<feature type="binding site" evidence="1">
    <location>
        <position position="171"/>
    </location>
    <ligand>
        <name>deamido-NAD(+)</name>
        <dbReference type="ChEBI" id="CHEBI:58437"/>
    </ligand>
</feature>
<feature type="binding site" evidence="1">
    <location>
        <position position="178"/>
    </location>
    <ligand>
        <name>deamido-NAD(+)</name>
        <dbReference type="ChEBI" id="CHEBI:58437"/>
    </ligand>
</feature>
<feature type="binding site" evidence="1">
    <location>
        <position position="187"/>
    </location>
    <ligand>
        <name>ATP</name>
        <dbReference type="ChEBI" id="CHEBI:30616"/>
    </ligand>
</feature>
<feature type="binding site" evidence="1">
    <location>
        <position position="209"/>
    </location>
    <ligand>
        <name>ATP</name>
        <dbReference type="ChEBI" id="CHEBI:30616"/>
    </ligand>
</feature>
<feature type="binding site" evidence="1">
    <location>
        <begin position="258"/>
        <end position="259"/>
    </location>
    <ligand>
        <name>deamido-NAD(+)</name>
        <dbReference type="ChEBI" id="CHEBI:58437"/>
    </ligand>
</feature>
<organism>
    <name type="scientific">Bacillus cereus (strain Q1)</name>
    <dbReference type="NCBI Taxonomy" id="361100"/>
    <lineage>
        <taxon>Bacteria</taxon>
        <taxon>Bacillati</taxon>
        <taxon>Bacillota</taxon>
        <taxon>Bacilli</taxon>
        <taxon>Bacillales</taxon>
        <taxon>Bacillaceae</taxon>
        <taxon>Bacillus</taxon>
        <taxon>Bacillus cereus group</taxon>
    </lineage>
</organism>
<reference key="1">
    <citation type="journal article" date="2009" name="J. Bacteriol.">
        <title>Complete genome sequence of the extremophilic Bacillus cereus strain Q1 with industrial applications.</title>
        <authorList>
            <person name="Xiong Z."/>
            <person name="Jiang Y."/>
            <person name="Qi D."/>
            <person name="Lu H."/>
            <person name="Yang F."/>
            <person name="Yang J."/>
            <person name="Chen L."/>
            <person name="Sun L."/>
            <person name="Xu X."/>
            <person name="Xue Y."/>
            <person name="Zhu Y."/>
            <person name="Jin Q."/>
        </authorList>
    </citation>
    <scope>NUCLEOTIDE SEQUENCE [LARGE SCALE GENOMIC DNA]</scope>
    <source>
        <strain>Q1</strain>
    </source>
</reference>
<keyword id="KW-0067">ATP-binding</keyword>
<keyword id="KW-0436">Ligase</keyword>
<keyword id="KW-0460">Magnesium</keyword>
<keyword id="KW-0479">Metal-binding</keyword>
<keyword id="KW-0520">NAD</keyword>
<keyword id="KW-0547">Nucleotide-binding</keyword>
<dbReference type="EC" id="6.3.1.5" evidence="1"/>
<dbReference type="EMBL" id="CP000227">
    <property type="protein sequence ID" value="ACM12407.1"/>
    <property type="molecule type" value="Genomic_DNA"/>
</dbReference>
<dbReference type="SMR" id="B9IXY1"/>
<dbReference type="KEGG" id="bcq:BCQ_1979"/>
<dbReference type="HOGENOM" id="CLU_059327_3_0_9"/>
<dbReference type="UniPathway" id="UPA00253">
    <property type="reaction ID" value="UER00333"/>
</dbReference>
<dbReference type="Proteomes" id="UP000000441">
    <property type="component" value="Chromosome"/>
</dbReference>
<dbReference type="GO" id="GO:0005737">
    <property type="term" value="C:cytoplasm"/>
    <property type="evidence" value="ECO:0007669"/>
    <property type="project" value="InterPro"/>
</dbReference>
<dbReference type="GO" id="GO:0005524">
    <property type="term" value="F:ATP binding"/>
    <property type="evidence" value="ECO:0007669"/>
    <property type="project" value="UniProtKB-UniRule"/>
</dbReference>
<dbReference type="GO" id="GO:0004359">
    <property type="term" value="F:glutaminase activity"/>
    <property type="evidence" value="ECO:0007669"/>
    <property type="project" value="InterPro"/>
</dbReference>
<dbReference type="GO" id="GO:0046872">
    <property type="term" value="F:metal ion binding"/>
    <property type="evidence" value="ECO:0007669"/>
    <property type="project" value="UniProtKB-KW"/>
</dbReference>
<dbReference type="GO" id="GO:0003952">
    <property type="term" value="F:NAD+ synthase (glutamine-hydrolyzing) activity"/>
    <property type="evidence" value="ECO:0007669"/>
    <property type="project" value="InterPro"/>
</dbReference>
<dbReference type="GO" id="GO:0008795">
    <property type="term" value="F:NAD+ synthase activity"/>
    <property type="evidence" value="ECO:0007669"/>
    <property type="project" value="UniProtKB-UniRule"/>
</dbReference>
<dbReference type="GO" id="GO:0009435">
    <property type="term" value="P:NAD biosynthetic process"/>
    <property type="evidence" value="ECO:0007669"/>
    <property type="project" value="UniProtKB-UniRule"/>
</dbReference>
<dbReference type="CDD" id="cd00553">
    <property type="entry name" value="NAD_synthase"/>
    <property type="match status" value="1"/>
</dbReference>
<dbReference type="FunFam" id="3.40.50.620:FF:000015">
    <property type="entry name" value="NH(3)-dependent NAD(+) synthetase"/>
    <property type="match status" value="1"/>
</dbReference>
<dbReference type="Gene3D" id="3.40.50.620">
    <property type="entry name" value="HUPs"/>
    <property type="match status" value="1"/>
</dbReference>
<dbReference type="HAMAP" id="MF_00193">
    <property type="entry name" value="NadE_ammonia_dep"/>
    <property type="match status" value="1"/>
</dbReference>
<dbReference type="InterPro" id="IPR022310">
    <property type="entry name" value="NAD/GMP_synthase"/>
</dbReference>
<dbReference type="InterPro" id="IPR003694">
    <property type="entry name" value="NAD_synthase"/>
</dbReference>
<dbReference type="InterPro" id="IPR022926">
    <property type="entry name" value="NH(3)-dep_NAD(+)_synth"/>
</dbReference>
<dbReference type="InterPro" id="IPR014729">
    <property type="entry name" value="Rossmann-like_a/b/a_fold"/>
</dbReference>
<dbReference type="NCBIfam" id="TIGR00552">
    <property type="entry name" value="nadE"/>
    <property type="match status" value="1"/>
</dbReference>
<dbReference type="NCBIfam" id="NF001979">
    <property type="entry name" value="PRK00768.1"/>
    <property type="match status" value="1"/>
</dbReference>
<dbReference type="PANTHER" id="PTHR23090">
    <property type="entry name" value="NH 3 /GLUTAMINE-DEPENDENT NAD + SYNTHETASE"/>
    <property type="match status" value="1"/>
</dbReference>
<dbReference type="PANTHER" id="PTHR23090:SF7">
    <property type="entry name" value="NH(3)-DEPENDENT NAD(+) SYNTHETASE"/>
    <property type="match status" value="1"/>
</dbReference>
<dbReference type="Pfam" id="PF02540">
    <property type="entry name" value="NAD_synthase"/>
    <property type="match status" value="1"/>
</dbReference>
<dbReference type="SUPFAM" id="SSF52402">
    <property type="entry name" value="Adenine nucleotide alpha hydrolases-like"/>
    <property type="match status" value="1"/>
</dbReference>
<accession>B9IXY1</accession>